<feature type="chain" id="PRO_0000112355" description="Carbamoyl phosphate synthase small chain">
    <location>
        <begin position="1"/>
        <end position="358"/>
    </location>
</feature>
<feature type="domain" description="Glutamine amidotransferase type-1" evidence="1">
    <location>
        <begin position="174"/>
        <end position="358"/>
    </location>
</feature>
<feature type="region of interest" description="CPSase" evidence="1">
    <location>
        <begin position="1"/>
        <end position="172"/>
    </location>
</feature>
<feature type="active site" description="Nucleophile" evidence="1">
    <location>
        <position position="249"/>
    </location>
</feature>
<feature type="active site" evidence="1">
    <location>
        <position position="333"/>
    </location>
</feature>
<feature type="active site" evidence="1">
    <location>
        <position position="335"/>
    </location>
</feature>
<feature type="binding site" evidence="1">
    <location>
        <position position="45"/>
    </location>
    <ligand>
        <name>L-glutamine</name>
        <dbReference type="ChEBI" id="CHEBI:58359"/>
    </ligand>
</feature>
<feature type="binding site" evidence="1">
    <location>
        <position position="222"/>
    </location>
    <ligand>
        <name>L-glutamine</name>
        <dbReference type="ChEBI" id="CHEBI:58359"/>
    </ligand>
</feature>
<feature type="binding site" evidence="1">
    <location>
        <position position="224"/>
    </location>
    <ligand>
        <name>L-glutamine</name>
        <dbReference type="ChEBI" id="CHEBI:58359"/>
    </ligand>
</feature>
<feature type="binding site" evidence="1">
    <location>
        <position position="250"/>
    </location>
    <ligand>
        <name>L-glutamine</name>
        <dbReference type="ChEBI" id="CHEBI:58359"/>
    </ligand>
</feature>
<feature type="binding site" evidence="1">
    <location>
        <position position="253"/>
    </location>
    <ligand>
        <name>L-glutamine</name>
        <dbReference type="ChEBI" id="CHEBI:58359"/>
    </ligand>
</feature>
<feature type="binding site" evidence="1">
    <location>
        <position position="291"/>
    </location>
    <ligand>
        <name>L-glutamine</name>
        <dbReference type="ChEBI" id="CHEBI:58359"/>
    </ligand>
</feature>
<feature type="binding site" evidence="1">
    <location>
        <position position="294"/>
    </location>
    <ligand>
        <name>L-glutamine</name>
        <dbReference type="ChEBI" id="CHEBI:58359"/>
    </ligand>
</feature>
<keyword id="KW-0028">Amino-acid biosynthesis</keyword>
<keyword id="KW-0055">Arginine biosynthesis</keyword>
<keyword id="KW-0067">ATP-binding</keyword>
<keyword id="KW-0315">Glutamine amidotransferase</keyword>
<keyword id="KW-0436">Ligase</keyword>
<keyword id="KW-0547">Nucleotide-binding</keyword>
<keyword id="KW-0665">Pyrimidine biosynthesis</keyword>
<keyword id="KW-1185">Reference proteome</keyword>
<comment type="function">
    <text evidence="1">Small subunit of the glutamine-dependent carbamoyl phosphate synthetase (CPSase). CPSase catalyzes the formation of carbamoyl phosphate from the ammonia moiety of glutamine, carbonate, and phosphate donated by ATP, constituting the first step of 2 biosynthetic pathways, one leading to arginine and/or urea and the other to pyrimidine nucleotides. The small subunit (glutamine amidotransferase) binds and cleaves glutamine to supply the large subunit with the substrate ammonia.</text>
</comment>
<comment type="catalytic activity">
    <reaction evidence="1">
        <text>hydrogencarbonate + L-glutamine + 2 ATP + H2O = carbamoyl phosphate + L-glutamate + 2 ADP + phosphate + 2 H(+)</text>
        <dbReference type="Rhea" id="RHEA:18633"/>
        <dbReference type="ChEBI" id="CHEBI:15377"/>
        <dbReference type="ChEBI" id="CHEBI:15378"/>
        <dbReference type="ChEBI" id="CHEBI:17544"/>
        <dbReference type="ChEBI" id="CHEBI:29985"/>
        <dbReference type="ChEBI" id="CHEBI:30616"/>
        <dbReference type="ChEBI" id="CHEBI:43474"/>
        <dbReference type="ChEBI" id="CHEBI:58228"/>
        <dbReference type="ChEBI" id="CHEBI:58359"/>
        <dbReference type="ChEBI" id="CHEBI:456216"/>
        <dbReference type="EC" id="6.3.5.5"/>
    </reaction>
</comment>
<comment type="catalytic activity">
    <molecule>Carbamoyl phosphate synthase small chain</molecule>
    <reaction evidence="1">
        <text>L-glutamine + H2O = L-glutamate + NH4(+)</text>
        <dbReference type="Rhea" id="RHEA:15889"/>
        <dbReference type="ChEBI" id="CHEBI:15377"/>
        <dbReference type="ChEBI" id="CHEBI:28938"/>
        <dbReference type="ChEBI" id="CHEBI:29985"/>
        <dbReference type="ChEBI" id="CHEBI:58359"/>
    </reaction>
</comment>
<comment type="pathway">
    <text evidence="1">Amino-acid biosynthesis; L-arginine biosynthesis; carbamoyl phosphate from bicarbonate: step 1/1.</text>
</comment>
<comment type="pathway">
    <text evidence="1">Pyrimidine metabolism; UMP biosynthesis via de novo pathway; (S)-dihydroorotate from bicarbonate: step 1/3.</text>
</comment>
<comment type="subunit">
    <text evidence="1">Composed of two chains; the small (or glutamine) chain promotes the hydrolysis of glutamine to ammonia, which is used by the large (or ammonia) chain to synthesize carbamoyl phosphate. Tetramer of heterodimers (alpha,beta)4.</text>
</comment>
<comment type="similarity">
    <text evidence="1">Belongs to the CarA family.</text>
</comment>
<accession>O28995</accession>
<reference key="1">
    <citation type="journal article" date="1997" name="Nature">
        <title>The complete genome sequence of the hyperthermophilic, sulphate-reducing archaeon Archaeoglobus fulgidus.</title>
        <authorList>
            <person name="Klenk H.-P."/>
            <person name="Clayton R.A."/>
            <person name="Tomb J.-F."/>
            <person name="White O."/>
            <person name="Nelson K.E."/>
            <person name="Ketchum K.A."/>
            <person name="Dodson R.J."/>
            <person name="Gwinn M.L."/>
            <person name="Hickey E.K."/>
            <person name="Peterson J.D."/>
            <person name="Richardson D.L."/>
            <person name="Kerlavage A.R."/>
            <person name="Graham D.E."/>
            <person name="Kyrpides N.C."/>
            <person name="Fleischmann R.D."/>
            <person name="Quackenbush J."/>
            <person name="Lee N.H."/>
            <person name="Sutton G.G."/>
            <person name="Gill S.R."/>
            <person name="Kirkness E.F."/>
            <person name="Dougherty B.A."/>
            <person name="McKenney K."/>
            <person name="Adams M.D."/>
            <person name="Loftus B.J."/>
            <person name="Peterson S.N."/>
            <person name="Reich C.I."/>
            <person name="McNeil L.K."/>
            <person name="Badger J.H."/>
            <person name="Glodek A."/>
            <person name="Zhou L."/>
            <person name="Overbeek R."/>
            <person name="Gocayne J.D."/>
            <person name="Weidman J.F."/>
            <person name="McDonald L.A."/>
            <person name="Utterback T.R."/>
            <person name="Cotton M.D."/>
            <person name="Spriggs T."/>
            <person name="Artiach P."/>
            <person name="Kaine B.P."/>
            <person name="Sykes S.M."/>
            <person name="Sadow P.W."/>
            <person name="D'Andrea K.P."/>
            <person name="Bowman C."/>
            <person name="Fujii C."/>
            <person name="Garland S.A."/>
            <person name="Mason T.M."/>
            <person name="Olsen G.J."/>
            <person name="Fraser C.M."/>
            <person name="Smith H.O."/>
            <person name="Woese C.R."/>
            <person name="Venter J.C."/>
        </authorList>
    </citation>
    <scope>NUCLEOTIDE SEQUENCE [LARGE SCALE GENOMIC DNA]</scope>
    <source>
        <strain>ATCC 49558 / DSM 4304 / JCM 9628 / NBRC 100126 / VC-16</strain>
    </source>
</reference>
<sequence length="358" mass="39923">MKAALALEDGTYLEGKAFGAERGGLGEIVFCTSMTGYVEALTDPSYKGQILMMTYPLIGNYGVNREDFESDGVKVEGFVVKELCKNPSNWRSEMSVDELLKQYDVPGIEGVDTRMLTRKIRIYGSMKAAIGIGDVDREKLVRKAVEQPFISDIDLVDKVCVKEAKRFESDGDLEVVLVDCGVKMSIVRQLLKRGVNLTVVPYDFPAEKIKEMNPDGVFISNGPGDPARVKPTIETIRKLAGQIPMAGICLGHQLTALALGAKTFKLKFGHHGSNQPVKDFETGRVFISSQNHNFAVDTKTLPKEFEVTQINLNDHTVEGMVHKDFPLITVQYHPEAGPGPHDTYFFFDRYVDMLREYR</sequence>
<evidence type="ECO:0000255" key="1">
    <source>
        <dbReference type="HAMAP-Rule" id="MF_01209"/>
    </source>
</evidence>
<name>CARA_ARCFU</name>
<protein>
    <recommendedName>
        <fullName evidence="1">Carbamoyl phosphate synthase small chain</fullName>
        <ecNumber evidence="1">6.3.5.5</ecNumber>
    </recommendedName>
    <alternativeName>
        <fullName evidence="1">Carbamoyl phosphate synthetase glutamine chain</fullName>
    </alternativeName>
</protein>
<organism>
    <name type="scientific">Archaeoglobus fulgidus (strain ATCC 49558 / DSM 4304 / JCM 9628 / NBRC 100126 / VC-16)</name>
    <dbReference type="NCBI Taxonomy" id="224325"/>
    <lineage>
        <taxon>Archaea</taxon>
        <taxon>Methanobacteriati</taxon>
        <taxon>Methanobacteriota</taxon>
        <taxon>Archaeoglobi</taxon>
        <taxon>Archaeoglobales</taxon>
        <taxon>Archaeoglobaceae</taxon>
        <taxon>Archaeoglobus</taxon>
    </lineage>
</organism>
<proteinExistence type="inferred from homology"/>
<dbReference type="EC" id="6.3.5.5" evidence="1"/>
<dbReference type="EMBL" id="AE000782">
    <property type="protein sequence ID" value="AAB89971.1"/>
    <property type="molecule type" value="Genomic_DNA"/>
</dbReference>
<dbReference type="PIR" id="H69408">
    <property type="entry name" value="H69408"/>
</dbReference>
<dbReference type="RefSeq" id="WP_010878768.1">
    <property type="nucleotide sequence ID" value="NC_000917.1"/>
</dbReference>
<dbReference type="SMR" id="O28995"/>
<dbReference type="STRING" id="224325.AF_1273"/>
<dbReference type="MEROPS" id="C26.A33"/>
<dbReference type="PaxDb" id="224325-AF_1273"/>
<dbReference type="EnsemblBacteria" id="AAB89971">
    <property type="protein sequence ID" value="AAB89971"/>
    <property type="gene ID" value="AF_1273"/>
</dbReference>
<dbReference type="GeneID" id="1484497"/>
<dbReference type="KEGG" id="afu:AF_1273"/>
<dbReference type="eggNOG" id="arCOG00064">
    <property type="taxonomic scope" value="Archaea"/>
</dbReference>
<dbReference type="HOGENOM" id="CLU_035901_2_1_2"/>
<dbReference type="OrthoDB" id="7675at2157"/>
<dbReference type="PhylomeDB" id="O28995"/>
<dbReference type="UniPathway" id="UPA00068">
    <property type="reaction ID" value="UER00171"/>
</dbReference>
<dbReference type="UniPathway" id="UPA00070">
    <property type="reaction ID" value="UER00115"/>
</dbReference>
<dbReference type="Proteomes" id="UP000002199">
    <property type="component" value="Chromosome"/>
</dbReference>
<dbReference type="GO" id="GO:0005524">
    <property type="term" value="F:ATP binding"/>
    <property type="evidence" value="ECO:0007669"/>
    <property type="project" value="UniProtKB-UniRule"/>
</dbReference>
<dbReference type="GO" id="GO:0004088">
    <property type="term" value="F:carbamoyl-phosphate synthase (glutamine-hydrolyzing) activity"/>
    <property type="evidence" value="ECO:0007669"/>
    <property type="project" value="UniProtKB-UniRule"/>
</dbReference>
<dbReference type="GO" id="GO:0004359">
    <property type="term" value="F:glutaminase activity"/>
    <property type="evidence" value="ECO:0007669"/>
    <property type="project" value="RHEA"/>
</dbReference>
<dbReference type="GO" id="GO:0006207">
    <property type="term" value="P:'de novo' pyrimidine nucleobase biosynthetic process"/>
    <property type="evidence" value="ECO:0007669"/>
    <property type="project" value="InterPro"/>
</dbReference>
<dbReference type="GO" id="GO:0044205">
    <property type="term" value="P:'de novo' UMP biosynthetic process"/>
    <property type="evidence" value="ECO:0007669"/>
    <property type="project" value="UniProtKB-UniRule"/>
</dbReference>
<dbReference type="GO" id="GO:0006541">
    <property type="term" value="P:glutamine metabolic process"/>
    <property type="evidence" value="ECO:0007669"/>
    <property type="project" value="InterPro"/>
</dbReference>
<dbReference type="GO" id="GO:0006526">
    <property type="term" value="P:L-arginine biosynthetic process"/>
    <property type="evidence" value="ECO:0007669"/>
    <property type="project" value="UniProtKB-UniRule"/>
</dbReference>
<dbReference type="CDD" id="cd01744">
    <property type="entry name" value="GATase1_CPSase"/>
    <property type="match status" value="1"/>
</dbReference>
<dbReference type="FunFam" id="3.50.30.20:FF:000001">
    <property type="entry name" value="Carbamoyl-phosphate synthase small chain"/>
    <property type="match status" value="1"/>
</dbReference>
<dbReference type="Gene3D" id="3.40.50.880">
    <property type="match status" value="1"/>
</dbReference>
<dbReference type="Gene3D" id="3.50.30.20">
    <property type="entry name" value="Carbamoyl-phosphate synthase small subunit, N-terminal domain"/>
    <property type="match status" value="1"/>
</dbReference>
<dbReference type="HAMAP" id="MF_01209">
    <property type="entry name" value="CPSase_S_chain"/>
    <property type="match status" value="1"/>
</dbReference>
<dbReference type="InterPro" id="IPR050472">
    <property type="entry name" value="Anth_synth/Amidotransfase"/>
</dbReference>
<dbReference type="InterPro" id="IPR006274">
    <property type="entry name" value="CarbamoylP_synth_ssu"/>
</dbReference>
<dbReference type="InterPro" id="IPR002474">
    <property type="entry name" value="CarbamoylP_synth_ssu_N"/>
</dbReference>
<dbReference type="InterPro" id="IPR036480">
    <property type="entry name" value="CarbP_synth_ssu_N_sf"/>
</dbReference>
<dbReference type="InterPro" id="IPR029062">
    <property type="entry name" value="Class_I_gatase-like"/>
</dbReference>
<dbReference type="InterPro" id="IPR035686">
    <property type="entry name" value="CPSase_GATase1"/>
</dbReference>
<dbReference type="InterPro" id="IPR017926">
    <property type="entry name" value="GATASE"/>
</dbReference>
<dbReference type="NCBIfam" id="TIGR01368">
    <property type="entry name" value="CPSaseIIsmall"/>
    <property type="match status" value="1"/>
</dbReference>
<dbReference type="NCBIfam" id="NF009475">
    <property type="entry name" value="PRK12838.1"/>
    <property type="match status" value="1"/>
</dbReference>
<dbReference type="PANTHER" id="PTHR43418:SF7">
    <property type="entry name" value="CARBAMOYL-PHOSPHATE SYNTHASE SMALL CHAIN"/>
    <property type="match status" value="1"/>
</dbReference>
<dbReference type="PANTHER" id="PTHR43418">
    <property type="entry name" value="MULTIFUNCTIONAL TRYPTOPHAN BIOSYNTHESIS PROTEIN-RELATED"/>
    <property type="match status" value="1"/>
</dbReference>
<dbReference type="Pfam" id="PF00988">
    <property type="entry name" value="CPSase_sm_chain"/>
    <property type="match status" value="1"/>
</dbReference>
<dbReference type="Pfam" id="PF00117">
    <property type="entry name" value="GATase"/>
    <property type="match status" value="1"/>
</dbReference>
<dbReference type="PRINTS" id="PR00097">
    <property type="entry name" value="ANTSNTHASEII"/>
</dbReference>
<dbReference type="PRINTS" id="PR00099">
    <property type="entry name" value="CPSGATASE"/>
</dbReference>
<dbReference type="PRINTS" id="PR00096">
    <property type="entry name" value="GATASE"/>
</dbReference>
<dbReference type="SMART" id="SM01097">
    <property type="entry name" value="CPSase_sm_chain"/>
    <property type="match status" value="1"/>
</dbReference>
<dbReference type="SUPFAM" id="SSF52021">
    <property type="entry name" value="Carbamoyl phosphate synthetase, small subunit N-terminal domain"/>
    <property type="match status" value="1"/>
</dbReference>
<dbReference type="SUPFAM" id="SSF52317">
    <property type="entry name" value="Class I glutamine amidotransferase-like"/>
    <property type="match status" value="1"/>
</dbReference>
<dbReference type="PROSITE" id="PS51273">
    <property type="entry name" value="GATASE_TYPE_1"/>
    <property type="match status" value="1"/>
</dbReference>
<gene>
    <name evidence="1" type="primary">carA</name>
    <name type="ordered locus">AF_1273</name>
</gene>